<gene>
    <name evidence="1" type="primary">glmU</name>
    <name type="ordered locus">BruAb2_0641</name>
</gene>
<proteinExistence type="inferred from homology"/>
<comment type="function">
    <text evidence="1">Catalyzes the last two sequential reactions in the de novo biosynthetic pathway for UDP-N-acetylglucosamine (UDP-GlcNAc). The C-terminal domain catalyzes the transfer of acetyl group from acetyl coenzyme A to glucosamine-1-phosphate (GlcN-1-P) to produce N-acetylglucosamine-1-phosphate (GlcNAc-1-P), which is converted into UDP-GlcNAc by the transfer of uridine 5-monophosphate (from uridine 5-triphosphate), a reaction catalyzed by the N-terminal domain.</text>
</comment>
<comment type="catalytic activity">
    <reaction evidence="1">
        <text>alpha-D-glucosamine 1-phosphate + acetyl-CoA = N-acetyl-alpha-D-glucosamine 1-phosphate + CoA + H(+)</text>
        <dbReference type="Rhea" id="RHEA:13725"/>
        <dbReference type="ChEBI" id="CHEBI:15378"/>
        <dbReference type="ChEBI" id="CHEBI:57287"/>
        <dbReference type="ChEBI" id="CHEBI:57288"/>
        <dbReference type="ChEBI" id="CHEBI:57776"/>
        <dbReference type="ChEBI" id="CHEBI:58516"/>
        <dbReference type="EC" id="2.3.1.157"/>
    </reaction>
</comment>
<comment type="catalytic activity">
    <reaction evidence="1">
        <text>N-acetyl-alpha-D-glucosamine 1-phosphate + UTP + H(+) = UDP-N-acetyl-alpha-D-glucosamine + diphosphate</text>
        <dbReference type="Rhea" id="RHEA:13509"/>
        <dbReference type="ChEBI" id="CHEBI:15378"/>
        <dbReference type="ChEBI" id="CHEBI:33019"/>
        <dbReference type="ChEBI" id="CHEBI:46398"/>
        <dbReference type="ChEBI" id="CHEBI:57705"/>
        <dbReference type="ChEBI" id="CHEBI:57776"/>
        <dbReference type="EC" id="2.7.7.23"/>
    </reaction>
</comment>
<comment type="cofactor">
    <cofactor evidence="1">
        <name>Mg(2+)</name>
        <dbReference type="ChEBI" id="CHEBI:18420"/>
    </cofactor>
    <text evidence="1">Binds 1 Mg(2+) ion per subunit.</text>
</comment>
<comment type="pathway">
    <text evidence="1">Nucleotide-sugar biosynthesis; UDP-N-acetyl-alpha-D-glucosamine biosynthesis; N-acetyl-alpha-D-glucosamine 1-phosphate from alpha-D-glucosamine 6-phosphate (route II): step 2/2.</text>
</comment>
<comment type="pathway">
    <text evidence="1">Nucleotide-sugar biosynthesis; UDP-N-acetyl-alpha-D-glucosamine biosynthesis; UDP-N-acetyl-alpha-D-glucosamine from N-acetyl-alpha-D-glucosamine 1-phosphate: step 1/1.</text>
</comment>
<comment type="pathway">
    <text evidence="1">Bacterial outer membrane biogenesis; LPS lipid A biosynthesis.</text>
</comment>
<comment type="subunit">
    <text evidence="1">Homotrimer.</text>
</comment>
<comment type="subcellular location">
    <subcellularLocation>
        <location evidence="1">Cytoplasm</location>
    </subcellularLocation>
</comment>
<comment type="similarity">
    <text evidence="1">In the N-terminal section; belongs to the N-acetylglucosamine-1-phosphate uridyltransferase family.</text>
</comment>
<comment type="similarity">
    <text evidence="1">In the C-terminal section; belongs to the transferase hexapeptide repeat family.</text>
</comment>
<dbReference type="EC" id="2.7.7.23" evidence="1"/>
<dbReference type="EC" id="2.3.1.157" evidence="1"/>
<dbReference type="EMBL" id="AE017224">
    <property type="protein sequence ID" value="AAX76052.1"/>
    <property type="molecule type" value="Genomic_DNA"/>
</dbReference>
<dbReference type="RefSeq" id="WP_002966051.1">
    <property type="nucleotide sequence ID" value="NC_006933.1"/>
</dbReference>
<dbReference type="SMR" id="Q577Y2"/>
<dbReference type="EnsemblBacteria" id="AAX76052">
    <property type="protein sequence ID" value="AAX76052"/>
    <property type="gene ID" value="BruAb2_0641"/>
</dbReference>
<dbReference type="GeneID" id="93015456"/>
<dbReference type="KEGG" id="bmb:BruAb2_0641"/>
<dbReference type="HOGENOM" id="CLU_029499_15_2_5"/>
<dbReference type="UniPathway" id="UPA00113">
    <property type="reaction ID" value="UER00532"/>
</dbReference>
<dbReference type="UniPathway" id="UPA00113">
    <property type="reaction ID" value="UER00533"/>
</dbReference>
<dbReference type="UniPathway" id="UPA00973"/>
<dbReference type="Proteomes" id="UP000000540">
    <property type="component" value="Chromosome II"/>
</dbReference>
<dbReference type="GO" id="GO:0005737">
    <property type="term" value="C:cytoplasm"/>
    <property type="evidence" value="ECO:0007669"/>
    <property type="project" value="UniProtKB-SubCell"/>
</dbReference>
<dbReference type="GO" id="GO:0016020">
    <property type="term" value="C:membrane"/>
    <property type="evidence" value="ECO:0007669"/>
    <property type="project" value="GOC"/>
</dbReference>
<dbReference type="GO" id="GO:0019134">
    <property type="term" value="F:glucosamine-1-phosphate N-acetyltransferase activity"/>
    <property type="evidence" value="ECO:0007669"/>
    <property type="project" value="UniProtKB-UniRule"/>
</dbReference>
<dbReference type="GO" id="GO:0000287">
    <property type="term" value="F:magnesium ion binding"/>
    <property type="evidence" value="ECO:0007669"/>
    <property type="project" value="UniProtKB-UniRule"/>
</dbReference>
<dbReference type="GO" id="GO:0003977">
    <property type="term" value="F:UDP-N-acetylglucosamine diphosphorylase activity"/>
    <property type="evidence" value="ECO:0007669"/>
    <property type="project" value="UniProtKB-UniRule"/>
</dbReference>
<dbReference type="GO" id="GO:0000902">
    <property type="term" value="P:cell morphogenesis"/>
    <property type="evidence" value="ECO:0007669"/>
    <property type="project" value="UniProtKB-UniRule"/>
</dbReference>
<dbReference type="GO" id="GO:0071555">
    <property type="term" value="P:cell wall organization"/>
    <property type="evidence" value="ECO:0007669"/>
    <property type="project" value="UniProtKB-KW"/>
</dbReference>
<dbReference type="GO" id="GO:0009245">
    <property type="term" value="P:lipid A biosynthetic process"/>
    <property type="evidence" value="ECO:0007669"/>
    <property type="project" value="UniProtKB-UniRule"/>
</dbReference>
<dbReference type="GO" id="GO:0009252">
    <property type="term" value="P:peptidoglycan biosynthetic process"/>
    <property type="evidence" value="ECO:0007669"/>
    <property type="project" value="UniProtKB-UniRule"/>
</dbReference>
<dbReference type="GO" id="GO:0008360">
    <property type="term" value="P:regulation of cell shape"/>
    <property type="evidence" value="ECO:0007669"/>
    <property type="project" value="UniProtKB-KW"/>
</dbReference>
<dbReference type="GO" id="GO:0006048">
    <property type="term" value="P:UDP-N-acetylglucosamine biosynthetic process"/>
    <property type="evidence" value="ECO:0007669"/>
    <property type="project" value="UniProtKB-UniPathway"/>
</dbReference>
<dbReference type="CDD" id="cd02540">
    <property type="entry name" value="GT2_GlmU_N_bac"/>
    <property type="match status" value="1"/>
</dbReference>
<dbReference type="CDD" id="cd03353">
    <property type="entry name" value="LbH_GlmU_C"/>
    <property type="match status" value="1"/>
</dbReference>
<dbReference type="Gene3D" id="2.160.10.10">
    <property type="entry name" value="Hexapeptide repeat proteins"/>
    <property type="match status" value="1"/>
</dbReference>
<dbReference type="Gene3D" id="3.90.550.10">
    <property type="entry name" value="Spore Coat Polysaccharide Biosynthesis Protein SpsA, Chain A"/>
    <property type="match status" value="1"/>
</dbReference>
<dbReference type="HAMAP" id="MF_01631">
    <property type="entry name" value="GlmU"/>
    <property type="match status" value="1"/>
</dbReference>
<dbReference type="InterPro" id="IPR005882">
    <property type="entry name" value="Bifunctional_GlmU"/>
</dbReference>
<dbReference type="InterPro" id="IPR050065">
    <property type="entry name" value="GlmU-like"/>
</dbReference>
<dbReference type="InterPro" id="IPR038009">
    <property type="entry name" value="GlmU_C_LbH"/>
</dbReference>
<dbReference type="InterPro" id="IPR001451">
    <property type="entry name" value="Hexapep"/>
</dbReference>
<dbReference type="InterPro" id="IPR018357">
    <property type="entry name" value="Hexapep_transf_CS"/>
</dbReference>
<dbReference type="InterPro" id="IPR025877">
    <property type="entry name" value="MobA-like_NTP_Trfase"/>
</dbReference>
<dbReference type="InterPro" id="IPR029044">
    <property type="entry name" value="Nucleotide-diphossugar_trans"/>
</dbReference>
<dbReference type="InterPro" id="IPR011004">
    <property type="entry name" value="Trimer_LpxA-like_sf"/>
</dbReference>
<dbReference type="NCBIfam" id="TIGR01173">
    <property type="entry name" value="glmU"/>
    <property type="match status" value="1"/>
</dbReference>
<dbReference type="NCBIfam" id="NF010933">
    <property type="entry name" value="PRK14353.1"/>
    <property type="match status" value="1"/>
</dbReference>
<dbReference type="PANTHER" id="PTHR43584:SF3">
    <property type="entry name" value="BIFUNCTIONAL PROTEIN GLMU"/>
    <property type="match status" value="1"/>
</dbReference>
<dbReference type="PANTHER" id="PTHR43584">
    <property type="entry name" value="NUCLEOTIDYL TRANSFERASE"/>
    <property type="match status" value="1"/>
</dbReference>
<dbReference type="Pfam" id="PF00132">
    <property type="entry name" value="Hexapep"/>
    <property type="match status" value="1"/>
</dbReference>
<dbReference type="Pfam" id="PF12804">
    <property type="entry name" value="NTP_transf_3"/>
    <property type="match status" value="1"/>
</dbReference>
<dbReference type="SUPFAM" id="SSF53448">
    <property type="entry name" value="Nucleotide-diphospho-sugar transferases"/>
    <property type="match status" value="1"/>
</dbReference>
<dbReference type="SUPFAM" id="SSF51161">
    <property type="entry name" value="Trimeric LpxA-like enzymes"/>
    <property type="match status" value="1"/>
</dbReference>
<dbReference type="PROSITE" id="PS00101">
    <property type="entry name" value="HEXAPEP_TRANSFERASES"/>
    <property type="match status" value="1"/>
</dbReference>
<evidence type="ECO:0000255" key="1">
    <source>
        <dbReference type="HAMAP-Rule" id="MF_01631"/>
    </source>
</evidence>
<name>GLMU_BRUAB</name>
<accession>Q577Y2</accession>
<organism>
    <name type="scientific">Brucella abortus biovar 1 (strain 9-941)</name>
    <dbReference type="NCBI Taxonomy" id="262698"/>
    <lineage>
        <taxon>Bacteria</taxon>
        <taxon>Pseudomonadati</taxon>
        <taxon>Pseudomonadota</taxon>
        <taxon>Alphaproteobacteria</taxon>
        <taxon>Hyphomicrobiales</taxon>
        <taxon>Brucellaceae</taxon>
        <taxon>Brucella/Ochrobactrum group</taxon>
        <taxon>Brucella</taxon>
    </lineage>
</organism>
<protein>
    <recommendedName>
        <fullName evidence="1">Bifunctional protein GlmU</fullName>
    </recommendedName>
    <domain>
        <recommendedName>
            <fullName evidence="1">UDP-N-acetylglucosamine pyrophosphorylase</fullName>
            <ecNumber evidence="1">2.7.7.23</ecNumber>
        </recommendedName>
        <alternativeName>
            <fullName evidence="1">N-acetylglucosamine-1-phosphate uridyltransferase</fullName>
        </alternativeName>
    </domain>
    <domain>
        <recommendedName>
            <fullName evidence="1">Glucosamine-1-phosphate N-acetyltransferase</fullName>
            <ecNumber evidence="1">2.3.1.157</ecNumber>
        </recommendedName>
    </domain>
</protein>
<reference key="1">
    <citation type="journal article" date="2005" name="J. Bacteriol.">
        <title>Completion of the genome sequence of Brucella abortus and comparison to the highly similar genomes of Brucella melitensis and Brucella suis.</title>
        <authorList>
            <person name="Halling S.M."/>
            <person name="Peterson-Burch B.D."/>
            <person name="Bricker B.J."/>
            <person name="Zuerner R.L."/>
            <person name="Qing Z."/>
            <person name="Li L.-L."/>
            <person name="Kapur V."/>
            <person name="Alt D.P."/>
            <person name="Olsen S.C."/>
        </authorList>
    </citation>
    <scope>NUCLEOTIDE SEQUENCE [LARGE SCALE GENOMIC DNA]</scope>
    <source>
        <strain>9-941</strain>
    </source>
</reference>
<sequence length="454" mass="47886">MTDRTCLSIVLAAGEGTRMKSNLPKVLHRVAGLPLVCHVVNAVRGTGKSDVALVVGRGAEDVRSAVEKIAGPVSAFEQKERLGTAHAVLAAHEAIARGYDDLLIVFGDTPLIEAQSLLAARERLAQGADLVVIGFRPASPHGYGRLIEEGGQLVAIIEEKEATDEQKKIGFCNGGLMALRGQHALALLDAVGNDNAKGEYYLTDIVAIAHGKGLNVTAIEVPVDNVIGINNRAELAEAETIWQNRKRRELMLSGVTLIAPETVFFSYDTVIEPDVVIEPNVFFGPSVHVASGALIHSFSHLEGAQVGEKAEIGPFARLRPGADLAEKSKVGNFCEVKNAKVGKGAKINHLAYIGDAVIGASSNIGAGTITCNYDGYNKFKTIIGDNAFIGSNSSLVAPVEIGDNAYIASGSVITADVPADALALGRARQETKEGRAKILREKYAAIKAAKSVSK</sequence>
<feature type="chain" id="PRO_0000233744" description="Bifunctional protein GlmU">
    <location>
        <begin position="1"/>
        <end position="454"/>
    </location>
</feature>
<feature type="region of interest" description="Pyrophosphorylase" evidence="1">
    <location>
        <begin position="1"/>
        <end position="232"/>
    </location>
</feature>
<feature type="region of interest" description="Linker" evidence="1">
    <location>
        <begin position="233"/>
        <end position="253"/>
    </location>
</feature>
<feature type="region of interest" description="N-acetyltransferase" evidence="1">
    <location>
        <begin position="254"/>
        <end position="454"/>
    </location>
</feature>
<feature type="active site" description="Proton acceptor" evidence="1">
    <location>
        <position position="349"/>
    </location>
</feature>
<feature type="binding site" evidence="1">
    <location>
        <begin position="11"/>
        <end position="14"/>
    </location>
    <ligand>
        <name>UDP-N-acetyl-alpha-D-glucosamine</name>
        <dbReference type="ChEBI" id="CHEBI:57705"/>
    </ligand>
</feature>
<feature type="binding site" evidence="1">
    <location>
        <position position="25"/>
    </location>
    <ligand>
        <name>UDP-N-acetyl-alpha-D-glucosamine</name>
        <dbReference type="ChEBI" id="CHEBI:57705"/>
    </ligand>
</feature>
<feature type="binding site" evidence="1">
    <location>
        <position position="78"/>
    </location>
    <ligand>
        <name>UDP-N-acetyl-alpha-D-glucosamine</name>
        <dbReference type="ChEBI" id="CHEBI:57705"/>
    </ligand>
</feature>
<feature type="binding site" evidence="1">
    <location>
        <begin position="83"/>
        <end position="84"/>
    </location>
    <ligand>
        <name>UDP-N-acetyl-alpha-D-glucosamine</name>
        <dbReference type="ChEBI" id="CHEBI:57705"/>
    </ligand>
</feature>
<feature type="binding site" evidence="1">
    <location>
        <position position="108"/>
    </location>
    <ligand>
        <name>Mg(2+)</name>
        <dbReference type="ChEBI" id="CHEBI:18420"/>
    </ligand>
</feature>
<feature type="binding site" evidence="1">
    <location>
        <position position="144"/>
    </location>
    <ligand>
        <name>UDP-N-acetyl-alpha-D-glucosamine</name>
        <dbReference type="ChEBI" id="CHEBI:57705"/>
    </ligand>
</feature>
<feature type="binding site" evidence="1">
    <location>
        <position position="158"/>
    </location>
    <ligand>
        <name>UDP-N-acetyl-alpha-D-glucosamine</name>
        <dbReference type="ChEBI" id="CHEBI:57705"/>
    </ligand>
</feature>
<feature type="binding site" evidence="1">
    <location>
        <position position="173"/>
    </location>
    <ligand>
        <name>UDP-N-acetyl-alpha-D-glucosamine</name>
        <dbReference type="ChEBI" id="CHEBI:57705"/>
    </ligand>
</feature>
<feature type="binding site" evidence="1">
    <location>
        <position position="230"/>
    </location>
    <ligand>
        <name>Mg(2+)</name>
        <dbReference type="ChEBI" id="CHEBI:18420"/>
    </ligand>
</feature>
<feature type="binding site" evidence="1">
    <location>
        <position position="230"/>
    </location>
    <ligand>
        <name>UDP-N-acetyl-alpha-D-glucosamine</name>
        <dbReference type="ChEBI" id="CHEBI:57705"/>
    </ligand>
</feature>
<feature type="binding site" evidence="1">
    <location>
        <position position="319"/>
    </location>
    <ligand>
        <name>UDP-N-acetyl-alpha-D-glucosamine</name>
        <dbReference type="ChEBI" id="CHEBI:57705"/>
    </ligand>
</feature>
<feature type="binding site" evidence="1">
    <location>
        <position position="337"/>
    </location>
    <ligand>
        <name>UDP-N-acetyl-alpha-D-glucosamine</name>
        <dbReference type="ChEBI" id="CHEBI:57705"/>
    </ligand>
</feature>
<feature type="binding site" evidence="1">
    <location>
        <position position="352"/>
    </location>
    <ligand>
        <name>UDP-N-acetyl-alpha-D-glucosamine</name>
        <dbReference type="ChEBI" id="CHEBI:57705"/>
    </ligand>
</feature>
<feature type="binding site" evidence="1">
    <location>
        <position position="363"/>
    </location>
    <ligand>
        <name>UDP-N-acetyl-alpha-D-glucosamine</name>
        <dbReference type="ChEBI" id="CHEBI:57705"/>
    </ligand>
</feature>
<feature type="binding site" evidence="1">
    <location>
        <position position="366"/>
    </location>
    <ligand>
        <name>acetyl-CoA</name>
        <dbReference type="ChEBI" id="CHEBI:57288"/>
    </ligand>
</feature>
<feature type="binding site" evidence="1">
    <location>
        <begin position="372"/>
        <end position="373"/>
    </location>
    <ligand>
        <name>acetyl-CoA</name>
        <dbReference type="ChEBI" id="CHEBI:57288"/>
    </ligand>
</feature>
<feature type="binding site" evidence="1">
    <location>
        <position position="391"/>
    </location>
    <ligand>
        <name>acetyl-CoA</name>
        <dbReference type="ChEBI" id="CHEBI:57288"/>
    </ligand>
</feature>
<feature type="binding site" evidence="1">
    <location>
        <position position="409"/>
    </location>
    <ligand>
        <name>acetyl-CoA</name>
        <dbReference type="ChEBI" id="CHEBI:57288"/>
    </ligand>
</feature>
<feature type="binding site" evidence="1">
    <location>
        <position position="426"/>
    </location>
    <ligand>
        <name>acetyl-CoA</name>
        <dbReference type="ChEBI" id="CHEBI:57288"/>
    </ligand>
</feature>
<keyword id="KW-0012">Acyltransferase</keyword>
<keyword id="KW-0133">Cell shape</keyword>
<keyword id="KW-0961">Cell wall biogenesis/degradation</keyword>
<keyword id="KW-0963">Cytoplasm</keyword>
<keyword id="KW-0460">Magnesium</keyword>
<keyword id="KW-0479">Metal-binding</keyword>
<keyword id="KW-0511">Multifunctional enzyme</keyword>
<keyword id="KW-0548">Nucleotidyltransferase</keyword>
<keyword id="KW-0573">Peptidoglycan synthesis</keyword>
<keyword id="KW-0677">Repeat</keyword>
<keyword id="KW-0808">Transferase</keyword>